<feature type="chain" id="PRO_0000259327" description="D-aminoacyl-tRNA deacylase">
    <location>
        <begin position="1"/>
        <end position="141"/>
    </location>
</feature>
<feature type="short sequence motif" description="Gly-cisPro motif, important for rejection of L-amino acids" evidence="1">
    <location>
        <begin position="133"/>
        <end position="134"/>
    </location>
</feature>
<keyword id="KW-0963">Cytoplasm</keyword>
<keyword id="KW-0378">Hydrolase</keyword>
<keyword id="KW-0694">RNA-binding</keyword>
<keyword id="KW-0820">tRNA-binding</keyword>
<name>DTD_THEFY</name>
<dbReference type="EC" id="3.1.1.96" evidence="1"/>
<dbReference type="EMBL" id="CP000088">
    <property type="protein sequence ID" value="AAZ56955.1"/>
    <property type="molecule type" value="Genomic_DNA"/>
</dbReference>
<dbReference type="RefSeq" id="WP_011293345.1">
    <property type="nucleotide sequence ID" value="NC_007333.1"/>
</dbReference>
<dbReference type="SMR" id="Q47KR7"/>
<dbReference type="STRING" id="269800.Tfu_2922"/>
<dbReference type="KEGG" id="tfu:Tfu_2922"/>
<dbReference type="eggNOG" id="COG1490">
    <property type="taxonomic scope" value="Bacteria"/>
</dbReference>
<dbReference type="HOGENOM" id="CLU_076901_1_2_11"/>
<dbReference type="OrthoDB" id="9801395at2"/>
<dbReference type="GO" id="GO:0005737">
    <property type="term" value="C:cytoplasm"/>
    <property type="evidence" value="ECO:0007669"/>
    <property type="project" value="UniProtKB-SubCell"/>
</dbReference>
<dbReference type="GO" id="GO:0051500">
    <property type="term" value="F:D-tyrosyl-tRNA(Tyr) deacylase activity"/>
    <property type="evidence" value="ECO:0007669"/>
    <property type="project" value="TreeGrafter"/>
</dbReference>
<dbReference type="GO" id="GO:0106026">
    <property type="term" value="F:Gly-tRNA(Ala) deacylase activity"/>
    <property type="evidence" value="ECO:0007669"/>
    <property type="project" value="UniProtKB-UniRule"/>
</dbReference>
<dbReference type="GO" id="GO:0043908">
    <property type="term" value="F:Ser(Gly)-tRNA(Ala) hydrolase activity"/>
    <property type="evidence" value="ECO:0007669"/>
    <property type="project" value="UniProtKB-UniRule"/>
</dbReference>
<dbReference type="GO" id="GO:0000049">
    <property type="term" value="F:tRNA binding"/>
    <property type="evidence" value="ECO:0007669"/>
    <property type="project" value="UniProtKB-UniRule"/>
</dbReference>
<dbReference type="GO" id="GO:0019478">
    <property type="term" value="P:D-amino acid catabolic process"/>
    <property type="evidence" value="ECO:0007669"/>
    <property type="project" value="UniProtKB-UniRule"/>
</dbReference>
<dbReference type="CDD" id="cd00563">
    <property type="entry name" value="Dtyr_deacylase"/>
    <property type="match status" value="1"/>
</dbReference>
<dbReference type="FunFam" id="3.50.80.10:FF:000002">
    <property type="entry name" value="D-aminoacyl-tRNA deacylase"/>
    <property type="match status" value="1"/>
</dbReference>
<dbReference type="Gene3D" id="3.50.80.10">
    <property type="entry name" value="D-tyrosyl-tRNA(Tyr) deacylase"/>
    <property type="match status" value="1"/>
</dbReference>
<dbReference type="HAMAP" id="MF_00518">
    <property type="entry name" value="Deacylase_Dtd"/>
    <property type="match status" value="1"/>
</dbReference>
<dbReference type="InterPro" id="IPR003732">
    <property type="entry name" value="Daa-tRNA_deacyls_DTD"/>
</dbReference>
<dbReference type="InterPro" id="IPR023509">
    <property type="entry name" value="DTD-like_sf"/>
</dbReference>
<dbReference type="NCBIfam" id="TIGR00256">
    <property type="entry name" value="D-aminoacyl-tRNA deacylase"/>
    <property type="match status" value="1"/>
</dbReference>
<dbReference type="PANTHER" id="PTHR10472:SF5">
    <property type="entry name" value="D-AMINOACYL-TRNA DEACYLASE 1"/>
    <property type="match status" value="1"/>
</dbReference>
<dbReference type="PANTHER" id="PTHR10472">
    <property type="entry name" value="D-TYROSYL-TRNA TYR DEACYLASE"/>
    <property type="match status" value="1"/>
</dbReference>
<dbReference type="Pfam" id="PF02580">
    <property type="entry name" value="Tyr_Deacylase"/>
    <property type="match status" value="1"/>
</dbReference>
<dbReference type="SUPFAM" id="SSF69500">
    <property type="entry name" value="DTD-like"/>
    <property type="match status" value="1"/>
</dbReference>
<sequence length="141" mass="14919">MRAVVQRVSHASVTVDGKVVGAIDEPGLLALVGVTHTDGPAEAAKLARKLWTLRILEDEKSCSDVGAPLLVVSQFTLYGDARKGRRPTWHAAAPGPVAEPLVDQVVEELRALGARVETGVFGARMSVALTNEGPFTVLLEV</sequence>
<reference key="1">
    <citation type="journal article" date="2007" name="J. Bacteriol.">
        <title>Genome sequence and analysis of the soil cellulolytic actinomycete Thermobifida fusca YX.</title>
        <authorList>
            <person name="Lykidis A."/>
            <person name="Mavromatis K."/>
            <person name="Ivanova N."/>
            <person name="Anderson I."/>
            <person name="Land M."/>
            <person name="DiBartolo G."/>
            <person name="Martinez M."/>
            <person name="Lapidus A."/>
            <person name="Lucas S."/>
            <person name="Copeland A."/>
            <person name="Richardson P."/>
            <person name="Wilson D.B."/>
            <person name="Kyrpides N."/>
        </authorList>
    </citation>
    <scope>NUCLEOTIDE SEQUENCE [LARGE SCALE GENOMIC DNA]</scope>
    <source>
        <strain>YX</strain>
    </source>
</reference>
<comment type="function">
    <text evidence="1">An aminoacyl-tRNA editing enzyme that deacylates mischarged D-aminoacyl-tRNAs. Also deacylates mischarged glycyl-tRNA(Ala), protecting cells against glycine mischarging by AlaRS. Acts via tRNA-based rather than protein-based catalysis; rejects L-amino acids rather than detecting D-amino acids in the active site. By recycling D-aminoacyl-tRNA to D-amino acids and free tRNA molecules, this enzyme counteracts the toxicity associated with the formation of D-aminoacyl-tRNA entities in vivo and helps enforce protein L-homochirality.</text>
</comment>
<comment type="catalytic activity">
    <reaction evidence="1">
        <text>glycyl-tRNA(Ala) + H2O = tRNA(Ala) + glycine + H(+)</text>
        <dbReference type="Rhea" id="RHEA:53744"/>
        <dbReference type="Rhea" id="RHEA-COMP:9657"/>
        <dbReference type="Rhea" id="RHEA-COMP:13640"/>
        <dbReference type="ChEBI" id="CHEBI:15377"/>
        <dbReference type="ChEBI" id="CHEBI:15378"/>
        <dbReference type="ChEBI" id="CHEBI:57305"/>
        <dbReference type="ChEBI" id="CHEBI:78442"/>
        <dbReference type="ChEBI" id="CHEBI:78522"/>
        <dbReference type="EC" id="3.1.1.96"/>
    </reaction>
</comment>
<comment type="catalytic activity">
    <reaction evidence="1">
        <text>a D-aminoacyl-tRNA + H2O = a tRNA + a D-alpha-amino acid + H(+)</text>
        <dbReference type="Rhea" id="RHEA:13953"/>
        <dbReference type="Rhea" id="RHEA-COMP:10123"/>
        <dbReference type="Rhea" id="RHEA-COMP:10124"/>
        <dbReference type="ChEBI" id="CHEBI:15377"/>
        <dbReference type="ChEBI" id="CHEBI:15378"/>
        <dbReference type="ChEBI" id="CHEBI:59871"/>
        <dbReference type="ChEBI" id="CHEBI:78442"/>
        <dbReference type="ChEBI" id="CHEBI:79333"/>
        <dbReference type="EC" id="3.1.1.96"/>
    </reaction>
</comment>
<comment type="subunit">
    <text evidence="1">Homodimer.</text>
</comment>
<comment type="subcellular location">
    <subcellularLocation>
        <location evidence="1">Cytoplasm</location>
    </subcellularLocation>
</comment>
<comment type="domain">
    <text evidence="1">A Gly-cisPro motif from one monomer fits into the active site of the other monomer to allow specific chiral rejection of L-amino acids.</text>
</comment>
<comment type="similarity">
    <text evidence="1">Belongs to the DTD family.</text>
</comment>
<accession>Q47KR7</accession>
<protein>
    <recommendedName>
        <fullName evidence="1">D-aminoacyl-tRNA deacylase</fullName>
        <shortName evidence="1">DTD</shortName>
        <ecNumber evidence="1">3.1.1.96</ecNumber>
    </recommendedName>
    <alternativeName>
        <fullName evidence="1">Gly-tRNA(Ala) deacylase</fullName>
    </alternativeName>
</protein>
<proteinExistence type="inferred from homology"/>
<evidence type="ECO:0000255" key="1">
    <source>
        <dbReference type="HAMAP-Rule" id="MF_00518"/>
    </source>
</evidence>
<gene>
    <name evidence="1" type="primary">dtd</name>
    <name type="ordered locus">Tfu_2922</name>
</gene>
<organism>
    <name type="scientific">Thermobifida fusca (strain YX)</name>
    <dbReference type="NCBI Taxonomy" id="269800"/>
    <lineage>
        <taxon>Bacteria</taxon>
        <taxon>Bacillati</taxon>
        <taxon>Actinomycetota</taxon>
        <taxon>Actinomycetes</taxon>
        <taxon>Streptosporangiales</taxon>
        <taxon>Nocardiopsidaceae</taxon>
        <taxon>Thermobifida</taxon>
    </lineage>
</organism>